<accession>Q6LFW5</accession>
<sequence>MRVLYITANPKLIHHSVSLSLGELALQYYRELNPSHITDRLDLTTEEYPHLNSDTLSNFMNPHSNLATQSKIFKDYDKYIIVAPMWNLTVPSALKAYLDTVIIPNVLFRYTEQGTCEGLCGGKMIYIGARGGDYSHPPQSEYAFDDKYMEGIAKMIGLESYQSYVANAVGGYRRRSVAQWVEHAKYDIEQMVTSF</sequence>
<feature type="chain" id="PRO_0000245943" description="FMN-dependent NADH:quinone oxidoreductase 2">
    <location>
        <begin position="1"/>
        <end position="195"/>
    </location>
</feature>
<feature type="binding site" evidence="1">
    <location>
        <begin position="16"/>
        <end position="18"/>
    </location>
    <ligand>
        <name>FMN</name>
        <dbReference type="ChEBI" id="CHEBI:58210"/>
    </ligand>
</feature>
<feature type="binding site" evidence="1">
    <location>
        <begin position="85"/>
        <end position="88"/>
    </location>
    <ligand>
        <name>FMN</name>
        <dbReference type="ChEBI" id="CHEBI:58210"/>
    </ligand>
</feature>
<reference key="1">
    <citation type="journal article" date="2005" name="Science">
        <title>Life at depth: Photobacterium profundum genome sequence and expression analysis.</title>
        <authorList>
            <person name="Vezzi A."/>
            <person name="Campanaro S."/>
            <person name="D'Angelo M."/>
            <person name="Simonato F."/>
            <person name="Vitulo N."/>
            <person name="Lauro F.M."/>
            <person name="Cestaro A."/>
            <person name="Malacrida G."/>
            <person name="Simionati B."/>
            <person name="Cannata N."/>
            <person name="Romualdi C."/>
            <person name="Bartlett D.H."/>
            <person name="Valle G."/>
        </authorList>
    </citation>
    <scope>NUCLEOTIDE SEQUENCE [LARGE SCALE GENOMIC DNA]</scope>
    <source>
        <strain>ATCC BAA-1253 / SS9</strain>
    </source>
</reference>
<protein>
    <recommendedName>
        <fullName evidence="1">FMN-dependent NADH:quinone oxidoreductase 2</fullName>
        <ecNumber evidence="1">1.6.5.-</ecNumber>
    </recommendedName>
    <alternativeName>
        <fullName evidence="1">Azo-dye reductase 2</fullName>
    </alternativeName>
    <alternativeName>
        <fullName evidence="1">FMN-dependent NADH-azo compound oxidoreductase 2</fullName>
    </alternativeName>
    <alternativeName>
        <fullName evidence="1">FMN-dependent NADH-azoreductase 2</fullName>
        <ecNumber evidence="1">1.7.1.17</ecNumber>
    </alternativeName>
</protein>
<evidence type="ECO:0000255" key="1">
    <source>
        <dbReference type="HAMAP-Rule" id="MF_01216"/>
    </source>
</evidence>
<comment type="function">
    <text evidence="1">Quinone reductase that provides resistance to thiol-specific stress caused by electrophilic quinones.</text>
</comment>
<comment type="function">
    <text evidence="1">Also exhibits azoreductase activity. Catalyzes the reductive cleavage of the azo bond in aromatic azo compounds to the corresponding amines.</text>
</comment>
<comment type="catalytic activity">
    <reaction evidence="1">
        <text>2 a quinone + NADH + H(+) = 2 a 1,4-benzosemiquinone + NAD(+)</text>
        <dbReference type="Rhea" id="RHEA:65952"/>
        <dbReference type="ChEBI" id="CHEBI:15378"/>
        <dbReference type="ChEBI" id="CHEBI:57540"/>
        <dbReference type="ChEBI" id="CHEBI:57945"/>
        <dbReference type="ChEBI" id="CHEBI:132124"/>
        <dbReference type="ChEBI" id="CHEBI:134225"/>
    </reaction>
</comment>
<comment type="catalytic activity">
    <reaction evidence="1">
        <text>N,N-dimethyl-1,4-phenylenediamine + anthranilate + 2 NAD(+) = 2-(4-dimethylaminophenyl)diazenylbenzoate + 2 NADH + 2 H(+)</text>
        <dbReference type="Rhea" id="RHEA:55872"/>
        <dbReference type="ChEBI" id="CHEBI:15378"/>
        <dbReference type="ChEBI" id="CHEBI:15783"/>
        <dbReference type="ChEBI" id="CHEBI:16567"/>
        <dbReference type="ChEBI" id="CHEBI:57540"/>
        <dbReference type="ChEBI" id="CHEBI:57945"/>
        <dbReference type="ChEBI" id="CHEBI:71579"/>
        <dbReference type="EC" id="1.7.1.17"/>
    </reaction>
</comment>
<comment type="cofactor">
    <cofactor evidence="1">
        <name>FMN</name>
        <dbReference type="ChEBI" id="CHEBI:58210"/>
    </cofactor>
    <text evidence="1">Binds 1 FMN per subunit.</text>
</comment>
<comment type="subunit">
    <text evidence="1">Homodimer.</text>
</comment>
<comment type="similarity">
    <text evidence="1">Belongs to the azoreductase type 1 family.</text>
</comment>
<organism>
    <name type="scientific">Photobacterium profundum (strain SS9)</name>
    <dbReference type="NCBI Taxonomy" id="298386"/>
    <lineage>
        <taxon>Bacteria</taxon>
        <taxon>Pseudomonadati</taxon>
        <taxon>Pseudomonadota</taxon>
        <taxon>Gammaproteobacteria</taxon>
        <taxon>Vibrionales</taxon>
        <taxon>Vibrionaceae</taxon>
        <taxon>Photobacterium</taxon>
    </lineage>
</organism>
<proteinExistence type="inferred from homology"/>
<dbReference type="EC" id="1.6.5.-" evidence="1"/>
<dbReference type="EC" id="1.7.1.17" evidence="1"/>
<dbReference type="EMBL" id="CR378681">
    <property type="protein sequence ID" value="CAG23815.1"/>
    <property type="molecule type" value="Genomic_DNA"/>
</dbReference>
<dbReference type="RefSeq" id="WP_011221953.1">
    <property type="nucleotide sequence ID" value="NC_006371.1"/>
</dbReference>
<dbReference type="SMR" id="Q6LFW5"/>
<dbReference type="STRING" id="298386.PBPRB1970"/>
<dbReference type="KEGG" id="ppr:PBPRB1970"/>
<dbReference type="eggNOG" id="COG1182">
    <property type="taxonomic scope" value="Bacteria"/>
</dbReference>
<dbReference type="HOGENOM" id="CLU_088964_3_1_6"/>
<dbReference type="Proteomes" id="UP000000593">
    <property type="component" value="Chromosome 2"/>
</dbReference>
<dbReference type="GO" id="GO:0009055">
    <property type="term" value="F:electron transfer activity"/>
    <property type="evidence" value="ECO:0007669"/>
    <property type="project" value="UniProtKB-UniRule"/>
</dbReference>
<dbReference type="GO" id="GO:0010181">
    <property type="term" value="F:FMN binding"/>
    <property type="evidence" value="ECO:0007669"/>
    <property type="project" value="UniProtKB-UniRule"/>
</dbReference>
<dbReference type="GO" id="GO:0016652">
    <property type="term" value="F:oxidoreductase activity, acting on NAD(P)H as acceptor"/>
    <property type="evidence" value="ECO:0007669"/>
    <property type="project" value="UniProtKB-UniRule"/>
</dbReference>
<dbReference type="GO" id="GO:0016655">
    <property type="term" value="F:oxidoreductase activity, acting on NAD(P)H, quinone or similar compound as acceptor"/>
    <property type="evidence" value="ECO:0007669"/>
    <property type="project" value="InterPro"/>
</dbReference>
<dbReference type="Gene3D" id="3.40.50.360">
    <property type="match status" value="1"/>
</dbReference>
<dbReference type="HAMAP" id="MF_01216">
    <property type="entry name" value="Azoreductase_type1"/>
    <property type="match status" value="1"/>
</dbReference>
<dbReference type="InterPro" id="IPR003680">
    <property type="entry name" value="Flavodoxin_fold"/>
</dbReference>
<dbReference type="InterPro" id="IPR029039">
    <property type="entry name" value="Flavoprotein-like_sf"/>
</dbReference>
<dbReference type="InterPro" id="IPR050104">
    <property type="entry name" value="FMN-dep_NADH:Q_OxRdtase_AzoR1"/>
</dbReference>
<dbReference type="InterPro" id="IPR023048">
    <property type="entry name" value="NADH:quinone_OxRdtase_FMN_depd"/>
</dbReference>
<dbReference type="PANTHER" id="PTHR43741">
    <property type="entry name" value="FMN-DEPENDENT NADH-AZOREDUCTASE 1"/>
    <property type="match status" value="1"/>
</dbReference>
<dbReference type="PANTHER" id="PTHR43741:SF4">
    <property type="entry name" value="FMN-DEPENDENT NADH:QUINONE OXIDOREDUCTASE"/>
    <property type="match status" value="1"/>
</dbReference>
<dbReference type="Pfam" id="PF02525">
    <property type="entry name" value="Flavodoxin_2"/>
    <property type="match status" value="1"/>
</dbReference>
<dbReference type="SUPFAM" id="SSF52218">
    <property type="entry name" value="Flavoproteins"/>
    <property type="match status" value="1"/>
</dbReference>
<keyword id="KW-0285">Flavoprotein</keyword>
<keyword id="KW-0288">FMN</keyword>
<keyword id="KW-0520">NAD</keyword>
<keyword id="KW-0560">Oxidoreductase</keyword>
<keyword id="KW-1185">Reference proteome</keyword>
<gene>
    <name evidence="1" type="primary">azoR2</name>
    <name type="ordered locus">PBPRB1970</name>
</gene>
<name>AZOR2_PHOPR</name>